<evidence type="ECO:0000255" key="1">
    <source>
        <dbReference type="HAMAP-Rule" id="MF_01181"/>
    </source>
</evidence>
<protein>
    <recommendedName>
        <fullName evidence="1">Regulator of sigma D</fullName>
    </recommendedName>
</protein>
<comment type="function">
    <text evidence="1">Binds RpoD and negatively regulates RpoD-mediated transcription activation by preventing the interaction between the primary sigma factor RpoD with the catalytic core of the RNA polymerase and with promoter DNA. May be involved in replacement of the RNA polymerase sigma subunit from RpoD to RpoS during the transition from exponential growth to the stationary phase.</text>
</comment>
<comment type="subunit">
    <text evidence="1">Interacts with RpoD.</text>
</comment>
<comment type="subcellular location">
    <subcellularLocation>
        <location evidence="1">Cytoplasm</location>
    </subcellularLocation>
</comment>
<comment type="similarity">
    <text evidence="1">Belongs to the Rsd/AlgQ family.</text>
</comment>
<proteinExistence type="inferred from homology"/>
<reference key="1">
    <citation type="submission" date="2009-07" db="EMBL/GenBank/DDBJ databases">
        <title>Complete sequence of Pectobacterium carotovorum subsp. carotovorum PC1.</title>
        <authorList>
            <consortium name="US DOE Joint Genome Institute"/>
            <person name="Lucas S."/>
            <person name="Copeland A."/>
            <person name="Lapidus A."/>
            <person name="Glavina del Rio T."/>
            <person name="Tice H."/>
            <person name="Bruce D."/>
            <person name="Goodwin L."/>
            <person name="Pitluck S."/>
            <person name="Munk A.C."/>
            <person name="Brettin T."/>
            <person name="Detter J.C."/>
            <person name="Han C."/>
            <person name="Tapia R."/>
            <person name="Larimer F."/>
            <person name="Land M."/>
            <person name="Hauser L."/>
            <person name="Kyrpides N."/>
            <person name="Mikhailova N."/>
            <person name="Balakrishnan V."/>
            <person name="Glasner J."/>
            <person name="Perna N.T."/>
        </authorList>
    </citation>
    <scope>NUCLEOTIDE SEQUENCE [LARGE SCALE GENOMIC DNA]</scope>
    <source>
        <strain>PC1</strain>
    </source>
</reference>
<dbReference type="EMBL" id="CP001657">
    <property type="protein sequence ID" value="ACT11277.1"/>
    <property type="molecule type" value="Genomic_DNA"/>
</dbReference>
<dbReference type="RefSeq" id="WP_012772946.1">
    <property type="nucleotide sequence ID" value="NC_012917.1"/>
</dbReference>
<dbReference type="SMR" id="C6DHS7"/>
<dbReference type="STRING" id="561230.PC1_0217"/>
<dbReference type="KEGG" id="pct:PC1_0217"/>
<dbReference type="eggNOG" id="COG3160">
    <property type="taxonomic scope" value="Bacteria"/>
</dbReference>
<dbReference type="HOGENOM" id="CLU_142729_0_0_6"/>
<dbReference type="OrthoDB" id="5567237at2"/>
<dbReference type="Proteomes" id="UP000002736">
    <property type="component" value="Chromosome"/>
</dbReference>
<dbReference type="GO" id="GO:0005737">
    <property type="term" value="C:cytoplasm"/>
    <property type="evidence" value="ECO:0007669"/>
    <property type="project" value="UniProtKB-SubCell"/>
</dbReference>
<dbReference type="GO" id="GO:0006355">
    <property type="term" value="P:regulation of DNA-templated transcription"/>
    <property type="evidence" value="ECO:0007669"/>
    <property type="project" value="InterPro"/>
</dbReference>
<dbReference type="Gene3D" id="1.20.120.1370">
    <property type="entry name" value="Regulator of RNA polymerase sigma(70) subunit, domain 4"/>
    <property type="match status" value="1"/>
</dbReference>
<dbReference type="HAMAP" id="MF_01181">
    <property type="entry name" value="Rsd"/>
    <property type="match status" value="1"/>
</dbReference>
<dbReference type="InterPro" id="IPR038309">
    <property type="entry name" value="Rsd/AlgQ_sf"/>
</dbReference>
<dbReference type="InterPro" id="IPR023785">
    <property type="entry name" value="Sigma70_reg_Rsd"/>
</dbReference>
<dbReference type="InterPro" id="IPR007448">
    <property type="entry name" value="Sigma70_reg_Rsd_AlgQ"/>
</dbReference>
<dbReference type="NCBIfam" id="NF008723">
    <property type="entry name" value="PRK11718.1"/>
    <property type="match status" value="1"/>
</dbReference>
<dbReference type="Pfam" id="PF04353">
    <property type="entry name" value="Rsd_AlgQ"/>
    <property type="match status" value="1"/>
</dbReference>
<dbReference type="PIRSF" id="PIRSF016548">
    <property type="entry name" value="Rsd_AlgQ"/>
    <property type="match status" value="1"/>
</dbReference>
<gene>
    <name evidence="1" type="primary">rsd</name>
    <name type="ordered locus">PC1_0217</name>
</gene>
<name>RSD_PECCP</name>
<organism>
    <name type="scientific">Pectobacterium carotovorum subsp. carotovorum (strain PC1)</name>
    <dbReference type="NCBI Taxonomy" id="561230"/>
    <lineage>
        <taxon>Bacteria</taxon>
        <taxon>Pseudomonadati</taxon>
        <taxon>Pseudomonadota</taxon>
        <taxon>Gammaproteobacteria</taxon>
        <taxon>Enterobacterales</taxon>
        <taxon>Pectobacteriaceae</taxon>
        <taxon>Pectobacterium</taxon>
    </lineage>
</organism>
<accession>C6DHS7</accession>
<feature type="chain" id="PRO_1000213759" description="Regulator of sigma D">
    <location>
        <begin position="1"/>
        <end position="153"/>
    </location>
</feature>
<keyword id="KW-0963">Cytoplasm</keyword>
<keyword id="KW-0804">Transcription</keyword>
<keyword id="KW-0805">Transcription regulation</keyword>
<sequence length="153" mass="17581">MLNQLQSLTEYVGGNNALIDQWLQARKQLLVAYYHLVGIKPNKEALSLLDEEALDNFCQNLVDYLSTGHFHLYEKMLHEAATHSEQLLALSTQLDFALQSNTQQIMTFYDNHLATAIDHDNCLEFQQALSSVGETLEERFTLEDNMIRLVYDN</sequence>